<accession>B2VD18</accession>
<protein>
    <recommendedName>
        <fullName evidence="1">Pantothenate synthetase</fullName>
        <shortName evidence="1">PS</shortName>
        <ecNumber evidence="1">6.3.2.1</ecNumber>
    </recommendedName>
    <alternativeName>
        <fullName evidence="1">Pantoate--beta-alanine ligase</fullName>
    </alternativeName>
    <alternativeName>
        <fullName evidence="1">Pantoate-activating enzyme</fullName>
    </alternativeName>
</protein>
<sequence length="284" mass="31668">MLIIETLPMLRREVRRWRQDGKRVALVPTMGNLHDGHMTLVDEARERADIVIVSIFVNPMQFERADDLARYPRTLQEDCEKLNRRGVDLVFSPAPADIYPHGVDGQTFVDVPSLSTLLEGASRPGHFRGVSTIVSKLFNLVQPDLACFGEKDYQQLALIRKMVADMGYDIDIIGVPTVRAKDGLALSSRNGYLTAEERKIAPLLSKVMQQIAERLGQGERHVEEMMISAENTLAENGLRADGLAIVDADTLLPLNVDSQRAVILMAAWLGKARLIDNQQVDLTQ</sequence>
<proteinExistence type="inferred from homology"/>
<feature type="chain" id="PRO_1000097067" description="Pantothenate synthetase">
    <location>
        <begin position="1"/>
        <end position="284"/>
    </location>
</feature>
<feature type="active site" description="Proton donor" evidence="1">
    <location>
        <position position="37"/>
    </location>
</feature>
<feature type="binding site" evidence="1">
    <location>
        <begin position="30"/>
        <end position="37"/>
    </location>
    <ligand>
        <name>ATP</name>
        <dbReference type="ChEBI" id="CHEBI:30616"/>
    </ligand>
</feature>
<feature type="binding site" evidence="1">
    <location>
        <position position="61"/>
    </location>
    <ligand>
        <name>(R)-pantoate</name>
        <dbReference type="ChEBI" id="CHEBI:15980"/>
    </ligand>
</feature>
<feature type="binding site" evidence="1">
    <location>
        <position position="61"/>
    </location>
    <ligand>
        <name>beta-alanine</name>
        <dbReference type="ChEBI" id="CHEBI:57966"/>
    </ligand>
</feature>
<feature type="binding site" evidence="1">
    <location>
        <begin position="149"/>
        <end position="152"/>
    </location>
    <ligand>
        <name>ATP</name>
        <dbReference type="ChEBI" id="CHEBI:30616"/>
    </ligand>
</feature>
<feature type="binding site" evidence="1">
    <location>
        <position position="155"/>
    </location>
    <ligand>
        <name>(R)-pantoate</name>
        <dbReference type="ChEBI" id="CHEBI:15980"/>
    </ligand>
</feature>
<feature type="binding site" evidence="1">
    <location>
        <position position="178"/>
    </location>
    <ligand>
        <name>ATP</name>
        <dbReference type="ChEBI" id="CHEBI:30616"/>
    </ligand>
</feature>
<feature type="binding site" evidence="1">
    <location>
        <begin position="186"/>
        <end position="189"/>
    </location>
    <ligand>
        <name>ATP</name>
        <dbReference type="ChEBI" id="CHEBI:30616"/>
    </ligand>
</feature>
<evidence type="ECO:0000255" key="1">
    <source>
        <dbReference type="HAMAP-Rule" id="MF_00158"/>
    </source>
</evidence>
<reference key="1">
    <citation type="journal article" date="2008" name="Environ. Microbiol.">
        <title>The genome of Erwinia tasmaniensis strain Et1/99, a non-pathogenic bacterium in the genus Erwinia.</title>
        <authorList>
            <person name="Kube M."/>
            <person name="Migdoll A.M."/>
            <person name="Mueller I."/>
            <person name="Kuhl H."/>
            <person name="Beck A."/>
            <person name="Reinhardt R."/>
            <person name="Geider K."/>
        </authorList>
    </citation>
    <scope>NUCLEOTIDE SEQUENCE [LARGE SCALE GENOMIC DNA]</scope>
    <source>
        <strain>DSM 17950 / CFBP 7177 / CIP 109463 / NCPPB 4357 / Et1/99</strain>
    </source>
</reference>
<organism>
    <name type="scientific">Erwinia tasmaniensis (strain DSM 17950 / CFBP 7177 / CIP 109463 / NCPPB 4357 / Et1/99)</name>
    <dbReference type="NCBI Taxonomy" id="465817"/>
    <lineage>
        <taxon>Bacteria</taxon>
        <taxon>Pseudomonadati</taxon>
        <taxon>Pseudomonadota</taxon>
        <taxon>Gammaproteobacteria</taxon>
        <taxon>Enterobacterales</taxon>
        <taxon>Erwiniaceae</taxon>
        <taxon>Erwinia</taxon>
    </lineage>
</organism>
<gene>
    <name evidence="1" type="primary">panC</name>
    <name type="ordered locus">ETA_08560</name>
</gene>
<keyword id="KW-0067">ATP-binding</keyword>
<keyword id="KW-0963">Cytoplasm</keyword>
<keyword id="KW-0436">Ligase</keyword>
<keyword id="KW-0547">Nucleotide-binding</keyword>
<keyword id="KW-0566">Pantothenate biosynthesis</keyword>
<keyword id="KW-1185">Reference proteome</keyword>
<name>PANC_ERWT9</name>
<dbReference type="EC" id="6.3.2.1" evidence="1"/>
<dbReference type="EMBL" id="CU468135">
    <property type="protein sequence ID" value="CAO95902.1"/>
    <property type="molecule type" value="Genomic_DNA"/>
</dbReference>
<dbReference type="RefSeq" id="WP_012440604.1">
    <property type="nucleotide sequence ID" value="NC_010694.1"/>
</dbReference>
<dbReference type="SMR" id="B2VD18"/>
<dbReference type="STRING" id="465817.ETA_08560"/>
<dbReference type="KEGG" id="eta:ETA_08560"/>
<dbReference type="eggNOG" id="COG0414">
    <property type="taxonomic scope" value="Bacteria"/>
</dbReference>
<dbReference type="HOGENOM" id="CLU_047148_0_0_6"/>
<dbReference type="OrthoDB" id="9773087at2"/>
<dbReference type="UniPathway" id="UPA00028">
    <property type="reaction ID" value="UER00005"/>
</dbReference>
<dbReference type="Proteomes" id="UP000001726">
    <property type="component" value="Chromosome"/>
</dbReference>
<dbReference type="GO" id="GO:0005829">
    <property type="term" value="C:cytosol"/>
    <property type="evidence" value="ECO:0007669"/>
    <property type="project" value="TreeGrafter"/>
</dbReference>
<dbReference type="GO" id="GO:0005524">
    <property type="term" value="F:ATP binding"/>
    <property type="evidence" value="ECO:0007669"/>
    <property type="project" value="UniProtKB-KW"/>
</dbReference>
<dbReference type="GO" id="GO:0004592">
    <property type="term" value="F:pantoate-beta-alanine ligase activity"/>
    <property type="evidence" value="ECO:0007669"/>
    <property type="project" value="UniProtKB-UniRule"/>
</dbReference>
<dbReference type="GO" id="GO:0015940">
    <property type="term" value="P:pantothenate biosynthetic process"/>
    <property type="evidence" value="ECO:0007669"/>
    <property type="project" value="UniProtKB-UniRule"/>
</dbReference>
<dbReference type="CDD" id="cd00560">
    <property type="entry name" value="PanC"/>
    <property type="match status" value="1"/>
</dbReference>
<dbReference type="FunFam" id="3.30.1300.10:FF:000001">
    <property type="entry name" value="Pantothenate synthetase"/>
    <property type="match status" value="1"/>
</dbReference>
<dbReference type="FunFam" id="3.40.50.620:FF:000013">
    <property type="entry name" value="Pantothenate synthetase"/>
    <property type="match status" value="1"/>
</dbReference>
<dbReference type="Gene3D" id="3.40.50.620">
    <property type="entry name" value="HUPs"/>
    <property type="match status" value="1"/>
</dbReference>
<dbReference type="Gene3D" id="3.30.1300.10">
    <property type="entry name" value="Pantoate-beta-alanine ligase, C-terminal domain"/>
    <property type="match status" value="1"/>
</dbReference>
<dbReference type="HAMAP" id="MF_00158">
    <property type="entry name" value="PanC"/>
    <property type="match status" value="1"/>
</dbReference>
<dbReference type="InterPro" id="IPR004821">
    <property type="entry name" value="Cyt_trans-like"/>
</dbReference>
<dbReference type="InterPro" id="IPR003721">
    <property type="entry name" value="Pantoate_ligase"/>
</dbReference>
<dbReference type="InterPro" id="IPR042176">
    <property type="entry name" value="Pantoate_ligase_C"/>
</dbReference>
<dbReference type="InterPro" id="IPR014729">
    <property type="entry name" value="Rossmann-like_a/b/a_fold"/>
</dbReference>
<dbReference type="NCBIfam" id="TIGR00125">
    <property type="entry name" value="cyt_tran_rel"/>
    <property type="match status" value="1"/>
</dbReference>
<dbReference type="NCBIfam" id="TIGR00018">
    <property type="entry name" value="panC"/>
    <property type="match status" value="1"/>
</dbReference>
<dbReference type="PANTHER" id="PTHR21299">
    <property type="entry name" value="CYTIDYLATE KINASE/PANTOATE-BETA-ALANINE LIGASE"/>
    <property type="match status" value="1"/>
</dbReference>
<dbReference type="PANTHER" id="PTHR21299:SF1">
    <property type="entry name" value="PANTOATE--BETA-ALANINE LIGASE"/>
    <property type="match status" value="1"/>
</dbReference>
<dbReference type="Pfam" id="PF02569">
    <property type="entry name" value="Pantoate_ligase"/>
    <property type="match status" value="1"/>
</dbReference>
<dbReference type="SUPFAM" id="SSF52374">
    <property type="entry name" value="Nucleotidylyl transferase"/>
    <property type="match status" value="1"/>
</dbReference>
<comment type="function">
    <text evidence="1">Catalyzes the condensation of pantoate with beta-alanine in an ATP-dependent reaction via a pantoyl-adenylate intermediate.</text>
</comment>
<comment type="catalytic activity">
    <reaction evidence="1">
        <text>(R)-pantoate + beta-alanine + ATP = (R)-pantothenate + AMP + diphosphate + H(+)</text>
        <dbReference type="Rhea" id="RHEA:10912"/>
        <dbReference type="ChEBI" id="CHEBI:15378"/>
        <dbReference type="ChEBI" id="CHEBI:15980"/>
        <dbReference type="ChEBI" id="CHEBI:29032"/>
        <dbReference type="ChEBI" id="CHEBI:30616"/>
        <dbReference type="ChEBI" id="CHEBI:33019"/>
        <dbReference type="ChEBI" id="CHEBI:57966"/>
        <dbReference type="ChEBI" id="CHEBI:456215"/>
        <dbReference type="EC" id="6.3.2.1"/>
    </reaction>
</comment>
<comment type="pathway">
    <text evidence="1">Cofactor biosynthesis; (R)-pantothenate biosynthesis; (R)-pantothenate from (R)-pantoate and beta-alanine: step 1/1.</text>
</comment>
<comment type="subunit">
    <text evidence="1">Homodimer.</text>
</comment>
<comment type="subcellular location">
    <subcellularLocation>
        <location evidence="1">Cytoplasm</location>
    </subcellularLocation>
</comment>
<comment type="miscellaneous">
    <text evidence="1">The reaction proceeds by a bi uni uni bi ping pong mechanism.</text>
</comment>
<comment type="similarity">
    <text evidence="1">Belongs to the pantothenate synthetase family.</text>
</comment>